<evidence type="ECO:0000255" key="1">
    <source>
        <dbReference type="HAMAP-Rule" id="MF_01157"/>
    </source>
</evidence>
<sequence>MLERIKGCFTESIQTQIAAAEALPDAISCAAMALVQSLLNGNKILCCGNGTSAANAQHFAASMINRFETERPSLPAIALNADNVVLTAITNDRLHDEVYAKQVRALGQAGDVLLAISTRGNSRDIVKAVEAAVTRDMTIVALTGYDGGELAGLLGQLDVEIRIPSHRGARVQELHMLTVNCLCDLIDNTLFPHQND</sequence>
<comment type="function">
    <text evidence="1">Required for the timely initiation of chromosomal replication via direct interactions with the DnaA initiator protein.</text>
</comment>
<comment type="subunit">
    <text evidence="1">Homotetramer; dimer of dimers.</text>
</comment>
<comment type="similarity">
    <text evidence="1">Belongs to the SIS family. DiaA subfamily.</text>
</comment>
<proteinExistence type="inferred from homology"/>
<feature type="chain" id="PRO_0000136563" description="DnaA initiator-associating protein DiaA">
    <location>
        <begin position="1"/>
        <end position="196"/>
    </location>
</feature>
<feature type="domain" description="SIS" evidence="1">
    <location>
        <begin position="34"/>
        <end position="196"/>
    </location>
</feature>
<keyword id="KW-0235">DNA replication</keyword>
<keyword id="KW-1185">Reference proteome</keyword>
<name>DIAA_YERPE</name>
<dbReference type="EMBL" id="AL590842">
    <property type="protein sequence ID" value="CAL22138.1"/>
    <property type="molecule type" value="Genomic_DNA"/>
</dbReference>
<dbReference type="EMBL" id="AE009952">
    <property type="protein sequence ID" value="AAM83716.1"/>
    <property type="molecule type" value="Genomic_DNA"/>
</dbReference>
<dbReference type="EMBL" id="AE017042">
    <property type="protein sequence ID" value="AAS63951.1"/>
    <property type="molecule type" value="Genomic_DNA"/>
</dbReference>
<dbReference type="PIR" id="AG0431">
    <property type="entry name" value="AG0431"/>
</dbReference>
<dbReference type="RefSeq" id="WP_002210146.1">
    <property type="nucleotide sequence ID" value="NZ_WUCM01000069.1"/>
</dbReference>
<dbReference type="RefSeq" id="YP_002348437.1">
    <property type="nucleotide sequence ID" value="NC_003143.1"/>
</dbReference>
<dbReference type="SMR" id="Q8ZB74"/>
<dbReference type="STRING" id="214092.YPO3550"/>
<dbReference type="PaxDb" id="214092-YPO3550"/>
<dbReference type="DNASU" id="1145069"/>
<dbReference type="EnsemblBacteria" id="AAS63951">
    <property type="protein sequence ID" value="AAS63951"/>
    <property type="gene ID" value="YP_3804"/>
</dbReference>
<dbReference type="GeneID" id="57975165"/>
<dbReference type="KEGG" id="ype:YPO3550"/>
<dbReference type="KEGG" id="ypk:y0122"/>
<dbReference type="KEGG" id="ypm:YP_3804"/>
<dbReference type="PATRIC" id="fig|214092.21.peg.4044"/>
<dbReference type="eggNOG" id="COG0279">
    <property type="taxonomic scope" value="Bacteria"/>
</dbReference>
<dbReference type="HOGENOM" id="CLU_080999_3_1_6"/>
<dbReference type="OMA" id="EMHILMI"/>
<dbReference type="OrthoDB" id="9810929at2"/>
<dbReference type="Proteomes" id="UP000000815">
    <property type="component" value="Chromosome"/>
</dbReference>
<dbReference type="Proteomes" id="UP000001019">
    <property type="component" value="Chromosome"/>
</dbReference>
<dbReference type="Proteomes" id="UP000002490">
    <property type="component" value="Chromosome"/>
</dbReference>
<dbReference type="GO" id="GO:1990102">
    <property type="term" value="C:DnaA-DiaA complex"/>
    <property type="evidence" value="ECO:0000318"/>
    <property type="project" value="GO_Central"/>
</dbReference>
<dbReference type="GO" id="GO:0097367">
    <property type="term" value="F:carbohydrate derivative binding"/>
    <property type="evidence" value="ECO:0007669"/>
    <property type="project" value="InterPro"/>
</dbReference>
<dbReference type="GO" id="GO:1901135">
    <property type="term" value="P:carbohydrate derivative metabolic process"/>
    <property type="evidence" value="ECO:0007669"/>
    <property type="project" value="InterPro"/>
</dbReference>
<dbReference type="GO" id="GO:0006260">
    <property type="term" value="P:DNA replication"/>
    <property type="evidence" value="ECO:0007669"/>
    <property type="project" value="UniProtKB-UniRule"/>
</dbReference>
<dbReference type="GO" id="GO:0032298">
    <property type="term" value="P:positive regulation of DNA-templated DNA replication initiation"/>
    <property type="evidence" value="ECO:0000318"/>
    <property type="project" value="GO_Central"/>
</dbReference>
<dbReference type="CDD" id="cd05006">
    <property type="entry name" value="SIS_GmhA"/>
    <property type="match status" value="1"/>
</dbReference>
<dbReference type="FunFam" id="3.40.50.10490:FF:000006">
    <property type="entry name" value="DnaA initiator-associating protein DiaA"/>
    <property type="match status" value="1"/>
</dbReference>
<dbReference type="Gene3D" id="3.40.50.10490">
    <property type="entry name" value="Glucose-6-phosphate isomerase like protein, domain 1"/>
    <property type="match status" value="1"/>
</dbReference>
<dbReference type="HAMAP" id="MF_01157">
    <property type="entry name" value="SIS_DiaA"/>
    <property type="match status" value="1"/>
</dbReference>
<dbReference type="InterPro" id="IPR023070">
    <property type="entry name" value="DiaA"/>
</dbReference>
<dbReference type="InterPro" id="IPR035461">
    <property type="entry name" value="GmhA/DiaA"/>
</dbReference>
<dbReference type="InterPro" id="IPR001347">
    <property type="entry name" value="SIS_dom"/>
</dbReference>
<dbReference type="InterPro" id="IPR046348">
    <property type="entry name" value="SIS_dom_sf"/>
</dbReference>
<dbReference type="InterPro" id="IPR050099">
    <property type="entry name" value="SIS_GmhA/DiaA_subfam"/>
</dbReference>
<dbReference type="NCBIfam" id="NF008138">
    <property type="entry name" value="PRK10886.1"/>
    <property type="match status" value="1"/>
</dbReference>
<dbReference type="PANTHER" id="PTHR30390:SF6">
    <property type="entry name" value="DNAA INITIATOR-ASSOCIATING PROTEIN DIAA"/>
    <property type="match status" value="1"/>
</dbReference>
<dbReference type="PANTHER" id="PTHR30390">
    <property type="entry name" value="SEDOHEPTULOSE 7-PHOSPHATE ISOMERASE / DNAA INITIATOR-ASSOCIATING FACTOR FOR REPLICATION INITIATION"/>
    <property type="match status" value="1"/>
</dbReference>
<dbReference type="Pfam" id="PF13580">
    <property type="entry name" value="SIS_2"/>
    <property type="match status" value="1"/>
</dbReference>
<dbReference type="SUPFAM" id="SSF53697">
    <property type="entry name" value="SIS domain"/>
    <property type="match status" value="1"/>
</dbReference>
<dbReference type="PROSITE" id="PS51464">
    <property type="entry name" value="SIS"/>
    <property type="match status" value="1"/>
</dbReference>
<protein>
    <recommendedName>
        <fullName evidence="1">DnaA initiator-associating protein DiaA</fullName>
    </recommendedName>
</protein>
<reference key="1">
    <citation type="journal article" date="2001" name="Nature">
        <title>Genome sequence of Yersinia pestis, the causative agent of plague.</title>
        <authorList>
            <person name="Parkhill J."/>
            <person name="Wren B.W."/>
            <person name="Thomson N.R."/>
            <person name="Titball R.W."/>
            <person name="Holden M.T.G."/>
            <person name="Prentice M.B."/>
            <person name="Sebaihia M."/>
            <person name="James K.D."/>
            <person name="Churcher C.M."/>
            <person name="Mungall K.L."/>
            <person name="Baker S."/>
            <person name="Basham D."/>
            <person name="Bentley S.D."/>
            <person name="Brooks K."/>
            <person name="Cerdeno-Tarraga A.-M."/>
            <person name="Chillingworth T."/>
            <person name="Cronin A."/>
            <person name="Davies R.M."/>
            <person name="Davis P."/>
            <person name="Dougan G."/>
            <person name="Feltwell T."/>
            <person name="Hamlin N."/>
            <person name="Holroyd S."/>
            <person name="Jagels K."/>
            <person name="Karlyshev A.V."/>
            <person name="Leather S."/>
            <person name="Moule S."/>
            <person name="Oyston P.C.F."/>
            <person name="Quail M.A."/>
            <person name="Rutherford K.M."/>
            <person name="Simmonds M."/>
            <person name="Skelton J."/>
            <person name="Stevens K."/>
            <person name="Whitehead S."/>
            <person name="Barrell B.G."/>
        </authorList>
    </citation>
    <scope>NUCLEOTIDE SEQUENCE [LARGE SCALE GENOMIC DNA]</scope>
    <source>
        <strain>CO-92 / Biovar Orientalis</strain>
    </source>
</reference>
<reference key="2">
    <citation type="journal article" date="2002" name="J. Bacteriol.">
        <title>Genome sequence of Yersinia pestis KIM.</title>
        <authorList>
            <person name="Deng W."/>
            <person name="Burland V."/>
            <person name="Plunkett G. III"/>
            <person name="Boutin A."/>
            <person name="Mayhew G.F."/>
            <person name="Liss P."/>
            <person name="Perna N.T."/>
            <person name="Rose D.J."/>
            <person name="Mau B."/>
            <person name="Zhou S."/>
            <person name="Schwartz D.C."/>
            <person name="Fetherston J.D."/>
            <person name="Lindler L.E."/>
            <person name="Brubaker R.R."/>
            <person name="Plano G.V."/>
            <person name="Straley S.C."/>
            <person name="McDonough K.A."/>
            <person name="Nilles M.L."/>
            <person name="Matson J.S."/>
            <person name="Blattner F.R."/>
            <person name="Perry R.D."/>
        </authorList>
    </citation>
    <scope>NUCLEOTIDE SEQUENCE [LARGE SCALE GENOMIC DNA]</scope>
    <source>
        <strain>KIM10+ / Biovar Mediaevalis</strain>
    </source>
</reference>
<reference key="3">
    <citation type="journal article" date="2004" name="DNA Res.">
        <title>Complete genome sequence of Yersinia pestis strain 91001, an isolate avirulent to humans.</title>
        <authorList>
            <person name="Song Y."/>
            <person name="Tong Z."/>
            <person name="Wang J."/>
            <person name="Wang L."/>
            <person name="Guo Z."/>
            <person name="Han Y."/>
            <person name="Zhang J."/>
            <person name="Pei D."/>
            <person name="Zhou D."/>
            <person name="Qin H."/>
            <person name="Pang X."/>
            <person name="Han Y."/>
            <person name="Zhai J."/>
            <person name="Li M."/>
            <person name="Cui B."/>
            <person name="Qi Z."/>
            <person name="Jin L."/>
            <person name="Dai R."/>
            <person name="Chen F."/>
            <person name="Li S."/>
            <person name="Ye C."/>
            <person name="Du Z."/>
            <person name="Lin W."/>
            <person name="Wang J."/>
            <person name="Yu J."/>
            <person name="Yang H."/>
            <person name="Wang J."/>
            <person name="Huang P."/>
            <person name="Yang R."/>
        </authorList>
    </citation>
    <scope>NUCLEOTIDE SEQUENCE [LARGE SCALE GENOMIC DNA]</scope>
    <source>
        <strain>91001 / Biovar Mediaevalis</strain>
    </source>
</reference>
<accession>Q8ZB74</accession>
<accession>Q0WBA1</accession>
<accession>Q74PT2</accession>
<accession>Q7CLA1</accession>
<gene>
    <name evidence="1" type="primary">diaA</name>
    <name type="ordered locus">YPO3550</name>
    <name type="ordered locus">y0122</name>
    <name type="ordered locus">YP_3804</name>
</gene>
<organism>
    <name type="scientific">Yersinia pestis</name>
    <dbReference type="NCBI Taxonomy" id="632"/>
    <lineage>
        <taxon>Bacteria</taxon>
        <taxon>Pseudomonadati</taxon>
        <taxon>Pseudomonadota</taxon>
        <taxon>Gammaproteobacteria</taxon>
        <taxon>Enterobacterales</taxon>
        <taxon>Yersiniaceae</taxon>
        <taxon>Yersinia</taxon>
    </lineage>
</organism>